<protein>
    <recommendedName>
        <fullName evidence="1">Dual-specificity RNA pseudouridine synthase RluA</fullName>
        <ecNumber evidence="1">5.4.99.28</ecNumber>
        <ecNumber evidence="1">5.4.99.29</ecNumber>
    </recommendedName>
    <alternativeName>
        <fullName evidence="1">23S rRNA pseudouridine(746) synthase</fullName>
    </alternativeName>
    <alternativeName>
        <fullName evidence="1">Ribosomal large subunit pseudouridine synthase A</fullName>
    </alternativeName>
    <alternativeName>
        <fullName evidence="1">rRNA pseudouridylate synthase A</fullName>
    </alternativeName>
    <alternativeName>
        <fullName evidence="1">rRNA-uridine isomerase A</fullName>
    </alternativeName>
    <alternativeName>
        <fullName evidence="1">tRNA pseudouridine(32) synthase</fullName>
    </alternativeName>
</protein>
<sequence>MALIEYHPPLNPFLEEVYRDNHIVVINKPSGLLSVPGNRPEYYDSVMTRVQQRYGFAEPAHRLDMATSGIILLALSKVAEKELKRQFRDREPKKHYIALLWGKLGDRVGQTGEINFPLICDWENRPRQKICYERGKKATTHYEVLEHLANNTTRVKFTPITGRSHQLRVHSLALGHPIIGDKFYANPLAKSLAPRLCLHAESLTIAHPISAELMTFNTEPTF</sequence>
<reference key="1">
    <citation type="submission" date="2003-06" db="EMBL/GenBank/DDBJ databases">
        <title>The complete genome sequence of Haemophilus ducreyi.</title>
        <authorList>
            <person name="Munson R.S. Jr."/>
            <person name="Ray W.C."/>
            <person name="Mahairas G."/>
            <person name="Sabo P."/>
            <person name="Mungur R."/>
            <person name="Johnson L."/>
            <person name="Nguyen D."/>
            <person name="Wang J."/>
            <person name="Forst C."/>
            <person name="Hood L."/>
        </authorList>
    </citation>
    <scope>NUCLEOTIDE SEQUENCE [LARGE SCALE GENOMIC DNA]</scope>
    <source>
        <strain>35000HP / ATCC 700724</strain>
    </source>
</reference>
<feature type="chain" id="PRO_0000162654" description="Dual-specificity RNA pseudouridine synthase RluA">
    <location>
        <begin position="1"/>
        <end position="222"/>
    </location>
</feature>
<feature type="active site" evidence="1">
    <location>
        <position position="64"/>
    </location>
</feature>
<keyword id="KW-0413">Isomerase</keyword>
<keyword id="KW-1185">Reference proteome</keyword>
<keyword id="KW-0698">rRNA processing</keyword>
<keyword id="KW-0819">tRNA processing</keyword>
<dbReference type="EC" id="5.4.99.28" evidence="1"/>
<dbReference type="EC" id="5.4.99.29" evidence="1"/>
<dbReference type="EMBL" id="AE017143">
    <property type="protein sequence ID" value="AAP96517.1"/>
    <property type="molecule type" value="Genomic_DNA"/>
</dbReference>
<dbReference type="RefSeq" id="WP_010945546.1">
    <property type="nucleotide sequence ID" value="NC_002940.2"/>
</dbReference>
<dbReference type="SMR" id="P59831"/>
<dbReference type="STRING" id="233412.HD_1762"/>
<dbReference type="KEGG" id="hdu:HD_1762"/>
<dbReference type="eggNOG" id="COG0564">
    <property type="taxonomic scope" value="Bacteria"/>
</dbReference>
<dbReference type="HOGENOM" id="CLU_016902_11_1_6"/>
<dbReference type="OrthoDB" id="9807829at2"/>
<dbReference type="Proteomes" id="UP000001022">
    <property type="component" value="Chromosome"/>
</dbReference>
<dbReference type="GO" id="GO:0160142">
    <property type="term" value="F:23S rRNA pseudouridine(746) synthase activity"/>
    <property type="evidence" value="ECO:0007669"/>
    <property type="project" value="UniProtKB-EC"/>
</dbReference>
<dbReference type="GO" id="GO:0003723">
    <property type="term" value="F:RNA binding"/>
    <property type="evidence" value="ECO:0007669"/>
    <property type="project" value="InterPro"/>
</dbReference>
<dbReference type="GO" id="GO:0160151">
    <property type="term" value="F:tRNA pseudouridine(32) synthase activity"/>
    <property type="evidence" value="ECO:0007669"/>
    <property type="project" value="UniProtKB-EC"/>
</dbReference>
<dbReference type="GO" id="GO:0000455">
    <property type="term" value="P:enzyme-directed rRNA pseudouridine synthesis"/>
    <property type="evidence" value="ECO:0007669"/>
    <property type="project" value="TreeGrafter"/>
</dbReference>
<dbReference type="GO" id="GO:0008033">
    <property type="term" value="P:tRNA processing"/>
    <property type="evidence" value="ECO:0007669"/>
    <property type="project" value="UniProtKB-KW"/>
</dbReference>
<dbReference type="CDD" id="cd02869">
    <property type="entry name" value="PseudoU_synth_RluA_like"/>
    <property type="match status" value="1"/>
</dbReference>
<dbReference type="FunFam" id="3.30.2350.10:FF:000005">
    <property type="entry name" value="Pseudouridine synthase"/>
    <property type="match status" value="1"/>
</dbReference>
<dbReference type="Gene3D" id="3.30.2350.10">
    <property type="entry name" value="Pseudouridine synthase"/>
    <property type="match status" value="1"/>
</dbReference>
<dbReference type="InterPro" id="IPR020103">
    <property type="entry name" value="PsdUridine_synth_cat_dom_sf"/>
</dbReference>
<dbReference type="InterPro" id="IPR006224">
    <property type="entry name" value="PsdUridine_synth_RluA-like_CS"/>
</dbReference>
<dbReference type="InterPro" id="IPR006145">
    <property type="entry name" value="PsdUridine_synth_RsuA/RluA"/>
</dbReference>
<dbReference type="InterPro" id="IPR050188">
    <property type="entry name" value="RluA_PseudoU_synthase"/>
</dbReference>
<dbReference type="NCBIfam" id="NF007543">
    <property type="entry name" value="PRK10158.1"/>
    <property type="match status" value="1"/>
</dbReference>
<dbReference type="PANTHER" id="PTHR21600:SF91">
    <property type="entry name" value="DUAL-SPECIFICITY RNA PSEUDOURIDINE SYNTHASE RLUA"/>
    <property type="match status" value="1"/>
</dbReference>
<dbReference type="PANTHER" id="PTHR21600">
    <property type="entry name" value="MITOCHONDRIAL RNA PSEUDOURIDINE SYNTHASE"/>
    <property type="match status" value="1"/>
</dbReference>
<dbReference type="Pfam" id="PF00849">
    <property type="entry name" value="PseudoU_synth_2"/>
    <property type="match status" value="1"/>
</dbReference>
<dbReference type="SUPFAM" id="SSF55120">
    <property type="entry name" value="Pseudouridine synthase"/>
    <property type="match status" value="1"/>
</dbReference>
<dbReference type="PROSITE" id="PS01129">
    <property type="entry name" value="PSI_RLU"/>
    <property type="match status" value="1"/>
</dbReference>
<proteinExistence type="inferred from homology"/>
<evidence type="ECO:0000250" key="1">
    <source>
        <dbReference type="UniProtKB" id="P0AA37"/>
    </source>
</evidence>
<evidence type="ECO:0000305" key="2"/>
<accession>P59831</accession>
<name>RLUA_HAEDU</name>
<gene>
    <name type="primary">rluA</name>
    <name type="ordered locus">HD_1762</name>
</gene>
<comment type="function">
    <text evidence="1">Dual specificity enzyme that catalyzes the synthesis of pseudouridine from uracil-746 in 23S ribosomal RNA and from uracil-32 in the anticodon stem and loop of transfer RNAs.</text>
</comment>
<comment type="catalytic activity">
    <reaction evidence="1">
        <text>uridine(32) in tRNA = pseudouridine(32) in tRNA</text>
        <dbReference type="Rhea" id="RHEA:42544"/>
        <dbReference type="Rhea" id="RHEA-COMP:10107"/>
        <dbReference type="Rhea" id="RHEA-COMP:10108"/>
        <dbReference type="ChEBI" id="CHEBI:65314"/>
        <dbReference type="ChEBI" id="CHEBI:65315"/>
        <dbReference type="EC" id="5.4.99.28"/>
    </reaction>
</comment>
<comment type="catalytic activity">
    <reaction evidence="1">
        <text>uridine(746) in 23S rRNA = pseudouridine(746) in 23S rRNA</text>
        <dbReference type="Rhea" id="RHEA:42548"/>
        <dbReference type="Rhea" id="RHEA-COMP:10109"/>
        <dbReference type="Rhea" id="RHEA-COMP:10110"/>
        <dbReference type="ChEBI" id="CHEBI:65314"/>
        <dbReference type="ChEBI" id="CHEBI:65315"/>
        <dbReference type="EC" id="5.4.99.29"/>
    </reaction>
</comment>
<comment type="similarity">
    <text evidence="2">Belongs to the pseudouridine synthase RluA family.</text>
</comment>
<organism>
    <name type="scientific">Haemophilus ducreyi (strain 35000HP / ATCC 700724)</name>
    <dbReference type="NCBI Taxonomy" id="233412"/>
    <lineage>
        <taxon>Bacteria</taxon>
        <taxon>Pseudomonadati</taxon>
        <taxon>Pseudomonadota</taxon>
        <taxon>Gammaproteobacteria</taxon>
        <taxon>Pasteurellales</taxon>
        <taxon>Pasteurellaceae</taxon>
        <taxon>Haemophilus</taxon>
    </lineage>
</organism>